<dbReference type="EC" id="4.99.1.3" evidence="1"/>
<dbReference type="EC" id="4.99.1.11" evidence="1"/>
<dbReference type="EMBL" id="L77117">
    <property type="protein sequence ID" value="AAB98975.1"/>
    <property type="molecule type" value="Genomic_DNA"/>
</dbReference>
<dbReference type="PIR" id="B64421">
    <property type="entry name" value="B64421"/>
</dbReference>
<dbReference type="RefSeq" id="WP_010870484.1">
    <property type="nucleotide sequence ID" value="NC_000909.1"/>
</dbReference>
<dbReference type="PDB" id="6M25">
    <property type="method" value="X-ray"/>
    <property type="resolution" value="2.50 A"/>
    <property type="chains" value="A/B=1-143"/>
</dbReference>
<dbReference type="PDB" id="6M26">
    <property type="method" value="X-ray"/>
    <property type="resolution" value="2.61 A"/>
    <property type="chains" value="A/B=1-143"/>
</dbReference>
<dbReference type="PDB" id="6M27">
    <property type="method" value="X-ray"/>
    <property type="resolution" value="2.60 A"/>
    <property type="chains" value="A/B=1-143"/>
</dbReference>
<dbReference type="PDB" id="6M28">
    <property type="method" value="X-ray"/>
    <property type="resolution" value="3.00 A"/>
    <property type="chains" value="A/B=1-143"/>
</dbReference>
<dbReference type="PDB" id="6M29">
    <property type="method" value="X-ray"/>
    <property type="resolution" value="2.90 A"/>
    <property type="chains" value="A/B=1-143"/>
</dbReference>
<dbReference type="PDB" id="6M2A">
    <property type="method" value="X-ray"/>
    <property type="resolution" value="2.23 A"/>
    <property type="chains" value="A/B=1-86, A/B=119-143"/>
</dbReference>
<dbReference type="PDB" id="6M2E">
    <property type="method" value="X-ray"/>
    <property type="resolution" value="2.60 A"/>
    <property type="chains" value="A/B=1-143"/>
</dbReference>
<dbReference type="PDB" id="6M2F">
    <property type="method" value="X-ray"/>
    <property type="resolution" value="2.40 A"/>
    <property type="chains" value="A/B=1-143"/>
</dbReference>
<dbReference type="PDB" id="6M2G">
    <property type="method" value="X-ray"/>
    <property type="resolution" value="2.80 A"/>
    <property type="chains" value="A/B=1-143"/>
</dbReference>
<dbReference type="PDB" id="6M2H">
    <property type="method" value="X-ray"/>
    <property type="resolution" value="3.10 A"/>
    <property type="chains" value="A/B=1-143"/>
</dbReference>
<dbReference type="PDB" id="8I55">
    <property type="method" value="X-ray"/>
    <property type="resolution" value="1.99 A"/>
    <property type="chains" value="A/B=1-143"/>
</dbReference>
<dbReference type="PDB" id="8I56">
    <property type="method" value="X-ray"/>
    <property type="resolution" value="2.84 A"/>
    <property type="chains" value="A/B=1-143"/>
</dbReference>
<dbReference type="PDB" id="8I57">
    <property type="method" value="X-ray"/>
    <property type="resolution" value="2.81 A"/>
    <property type="chains" value="A/B=1-143"/>
</dbReference>
<dbReference type="PDB" id="8I58">
    <property type="method" value="X-ray"/>
    <property type="resolution" value="3.09 A"/>
    <property type="chains" value="A/B=1-143"/>
</dbReference>
<dbReference type="PDB" id="8IYU">
    <property type="method" value="X-ray"/>
    <property type="resolution" value="2.10 A"/>
    <property type="chains" value="A/B=1-143"/>
</dbReference>
<dbReference type="PDBsum" id="6M25"/>
<dbReference type="PDBsum" id="6M26"/>
<dbReference type="PDBsum" id="6M27"/>
<dbReference type="PDBsum" id="6M28"/>
<dbReference type="PDBsum" id="6M29"/>
<dbReference type="PDBsum" id="6M2A"/>
<dbReference type="PDBsum" id="6M2E"/>
<dbReference type="PDBsum" id="6M2F"/>
<dbReference type="PDBsum" id="6M2G"/>
<dbReference type="PDBsum" id="6M2H"/>
<dbReference type="PDBsum" id="8I55"/>
<dbReference type="PDBsum" id="8I56"/>
<dbReference type="PDBsum" id="8I57"/>
<dbReference type="PDBsum" id="8I58"/>
<dbReference type="PDBsum" id="8IYU"/>
<dbReference type="SMR" id="Q58380"/>
<dbReference type="FunCoup" id="Q58380">
    <property type="interactions" value="110"/>
</dbReference>
<dbReference type="STRING" id="243232.MJ_0970"/>
<dbReference type="PaxDb" id="243232-MJ_0970"/>
<dbReference type="EnsemblBacteria" id="AAB98975">
    <property type="protein sequence ID" value="AAB98975"/>
    <property type="gene ID" value="MJ_0970"/>
</dbReference>
<dbReference type="GeneID" id="1451868"/>
<dbReference type="KEGG" id="mja:MJ_0970"/>
<dbReference type="eggNOG" id="arCOG02246">
    <property type="taxonomic scope" value="Archaea"/>
</dbReference>
<dbReference type="HOGENOM" id="CLU_065901_2_1_2"/>
<dbReference type="InParanoid" id="Q58380"/>
<dbReference type="OrthoDB" id="11653at2157"/>
<dbReference type="PhylomeDB" id="Q58380"/>
<dbReference type="UniPathway" id="UPA00148">
    <property type="reaction ID" value="UER00223"/>
</dbReference>
<dbReference type="Proteomes" id="UP000000805">
    <property type="component" value="Chromosome"/>
</dbReference>
<dbReference type="GO" id="GO:0050897">
    <property type="term" value="F:cobalt ion binding"/>
    <property type="evidence" value="ECO:0007669"/>
    <property type="project" value="UniProtKB-UniRule"/>
</dbReference>
<dbReference type="GO" id="GO:0016151">
    <property type="term" value="F:nickel cation binding"/>
    <property type="evidence" value="ECO:0007669"/>
    <property type="project" value="UniProtKB-UniRule"/>
</dbReference>
<dbReference type="GO" id="GO:0016852">
    <property type="term" value="F:sirohydrochlorin cobaltochelatase activity"/>
    <property type="evidence" value="ECO:0007669"/>
    <property type="project" value="UniProtKB-UniRule"/>
</dbReference>
<dbReference type="GO" id="GO:0019251">
    <property type="term" value="P:anaerobic cobalamin biosynthetic process"/>
    <property type="evidence" value="ECO:0007669"/>
    <property type="project" value="UniProtKB-UniRule"/>
</dbReference>
<dbReference type="GO" id="GO:0015948">
    <property type="term" value="P:methanogenesis"/>
    <property type="evidence" value="ECO:0007669"/>
    <property type="project" value="UniProtKB-KW"/>
</dbReference>
<dbReference type="CDD" id="cd03416">
    <property type="entry name" value="CbiX_SirB_N"/>
    <property type="match status" value="1"/>
</dbReference>
<dbReference type="Gene3D" id="3.40.50.1400">
    <property type="match status" value="1"/>
</dbReference>
<dbReference type="HAMAP" id="MF_00785">
    <property type="entry name" value="CbiX"/>
    <property type="match status" value="1"/>
</dbReference>
<dbReference type="InterPro" id="IPR002762">
    <property type="entry name" value="CbiX-like"/>
</dbReference>
<dbReference type="InterPro" id="IPR023652">
    <property type="entry name" value="SiroHydchlorin_Cochelatase"/>
</dbReference>
<dbReference type="InterPro" id="IPR050963">
    <property type="entry name" value="Sirohydro_Cobaltochel/CbiX"/>
</dbReference>
<dbReference type="NCBIfam" id="NF033198">
    <property type="entry name" value="F430_CfbA"/>
    <property type="match status" value="1"/>
</dbReference>
<dbReference type="NCBIfam" id="NF002090">
    <property type="entry name" value="PRK00923.1"/>
    <property type="match status" value="1"/>
</dbReference>
<dbReference type="PANTHER" id="PTHR33542">
    <property type="entry name" value="SIROHYDROCHLORIN FERROCHELATASE, CHLOROPLASTIC"/>
    <property type="match status" value="1"/>
</dbReference>
<dbReference type="PANTHER" id="PTHR33542:SF3">
    <property type="entry name" value="SIROHYDROCHLORIN FERROCHELATASE, CHLOROPLASTIC"/>
    <property type="match status" value="1"/>
</dbReference>
<dbReference type="Pfam" id="PF01903">
    <property type="entry name" value="CbiX"/>
    <property type="match status" value="1"/>
</dbReference>
<dbReference type="SUPFAM" id="SSF53800">
    <property type="entry name" value="Chelatase"/>
    <property type="match status" value="1"/>
</dbReference>
<protein>
    <recommendedName>
        <fullName evidence="1">Sirohydrochlorin cobaltochelatase</fullName>
        <ecNumber evidence="1">4.99.1.3</ecNumber>
    </recommendedName>
    <alternativeName>
        <fullName evidence="1">CbiXS</fullName>
    </alternativeName>
    <alternativeName>
        <fullName evidence="1">Sirohydrochlorin nickelchelatase</fullName>
        <ecNumber evidence="1">4.99.1.11</ecNumber>
    </alternativeName>
</protein>
<accession>Q58380</accession>
<evidence type="ECO:0000255" key="1">
    <source>
        <dbReference type="HAMAP-Rule" id="MF_00785"/>
    </source>
</evidence>
<evidence type="ECO:0007829" key="2">
    <source>
        <dbReference type="PDB" id="8I55"/>
    </source>
</evidence>
<comment type="function">
    <text evidence="1">Catalyzes the insertion of Co(2+) into sirohydrochlorin as part of the anaerobic pathway to cobalamin biosynthesis. Involved in the biosynthesis of the unique nickel-containing tetrapyrrole coenzyme F430, the prosthetic group of methyl-coenzyme M reductase (MCR), which plays a key role in methanogenesis and anaerobic methane oxidation. Catalyzes the insertion of Ni(2+) into sirohydrochlorin to yield Ni-sirohydrochlorin.</text>
</comment>
<comment type="catalytic activity">
    <reaction evidence="1">
        <text>Co-sirohydrochlorin + 2 H(+) = sirohydrochlorin + Co(2+)</text>
        <dbReference type="Rhea" id="RHEA:15893"/>
        <dbReference type="ChEBI" id="CHEBI:15378"/>
        <dbReference type="ChEBI" id="CHEBI:48828"/>
        <dbReference type="ChEBI" id="CHEBI:58351"/>
        <dbReference type="ChEBI" id="CHEBI:60049"/>
        <dbReference type="EC" id="4.99.1.3"/>
    </reaction>
</comment>
<comment type="catalytic activity">
    <reaction evidence="1">
        <text>Ni-sirohydrochlorin + 2 H(+) = sirohydrochlorin + Ni(2+)</text>
        <dbReference type="Rhea" id="RHEA:52796"/>
        <dbReference type="ChEBI" id="CHEBI:15378"/>
        <dbReference type="ChEBI" id="CHEBI:49786"/>
        <dbReference type="ChEBI" id="CHEBI:58351"/>
        <dbReference type="ChEBI" id="CHEBI:136841"/>
        <dbReference type="EC" id="4.99.1.11"/>
    </reaction>
</comment>
<comment type="pathway">
    <text evidence="1">Cofactor biosynthesis; adenosylcobalamin biosynthesis; cob(II)yrinate a,c-diamide from sirohydrochlorin (anaerobic route): step 1/10.</text>
</comment>
<comment type="subunit">
    <text evidence="1">Homotetramer; dimer of dimers.</text>
</comment>
<comment type="similarity">
    <text evidence="1">Belongs to the CbiX family. CbiXS subfamily.</text>
</comment>
<proteinExistence type="evidence at protein level"/>
<organism>
    <name type="scientific">Methanocaldococcus jannaschii (strain ATCC 43067 / DSM 2661 / JAL-1 / JCM 10045 / NBRC 100440)</name>
    <name type="common">Methanococcus jannaschii</name>
    <dbReference type="NCBI Taxonomy" id="243232"/>
    <lineage>
        <taxon>Archaea</taxon>
        <taxon>Methanobacteriati</taxon>
        <taxon>Methanobacteriota</taxon>
        <taxon>Methanomada group</taxon>
        <taxon>Methanococci</taxon>
        <taxon>Methanococcales</taxon>
        <taxon>Methanocaldococcaceae</taxon>
        <taxon>Methanocaldococcus</taxon>
    </lineage>
</organism>
<name>CFBA_METJA</name>
<reference key="1">
    <citation type="journal article" date="1996" name="Science">
        <title>Complete genome sequence of the methanogenic archaeon, Methanococcus jannaschii.</title>
        <authorList>
            <person name="Bult C.J."/>
            <person name="White O."/>
            <person name="Olsen G.J."/>
            <person name="Zhou L."/>
            <person name="Fleischmann R.D."/>
            <person name="Sutton G.G."/>
            <person name="Blake J.A."/>
            <person name="FitzGerald L.M."/>
            <person name="Clayton R.A."/>
            <person name="Gocayne J.D."/>
            <person name="Kerlavage A.R."/>
            <person name="Dougherty B.A."/>
            <person name="Tomb J.-F."/>
            <person name="Adams M.D."/>
            <person name="Reich C.I."/>
            <person name="Overbeek R."/>
            <person name="Kirkness E.F."/>
            <person name="Weinstock K.G."/>
            <person name="Merrick J.M."/>
            <person name="Glodek A."/>
            <person name="Scott J.L."/>
            <person name="Geoghagen N.S.M."/>
            <person name="Weidman J.F."/>
            <person name="Fuhrmann J.L."/>
            <person name="Nguyen D."/>
            <person name="Utterback T.R."/>
            <person name="Kelley J.M."/>
            <person name="Peterson J.D."/>
            <person name="Sadow P.W."/>
            <person name="Hanna M.C."/>
            <person name="Cotton M.D."/>
            <person name="Roberts K.M."/>
            <person name="Hurst M.A."/>
            <person name="Kaine B.P."/>
            <person name="Borodovsky M."/>
            <person name="Klenk H.-P."/>
            <person name="Fraser C.M."/>
            <person name="Smith H.O."/>
            <person name="Woese C.R."/>
            <person name="Venter J.C."/>
        </authorList>
    </citation>
    <scope>NUCLEOTIDE SEQUENCE [LARGE SCALE GENOMIC DNA]</scope>
    <source>
        <strain>ATCC 43067 / DSM 2661 / JAL-1 / JCM 10045 / NBRC 100440</strain>
    </source>
</reference>
<gene>
    <name evidence="1" type="primary">cbiX</name>
    <name evidence="1" type="synonym">cfbA</name>
    <name type="ordered locus">MJ0970</name>
</gene>
<keyword id="KW-0002">3D-structure</keyword>
<keyword id="KW-0169">Cobalamin biosynthesis</keyword>
<keyword id="KW-0170">Cobalt</keyword>
<keyword id="KW-0456">Lyase</keyword>
<keyword id="KW-0479">Metal-binding</keyword>
<keyword id="KW-0484">Methanogenesis</keyword>
<keyword id="KW-0533">Nickel</keyword>
<keyword id="KW-1185">Reference proteome</keyword>
<feature type="chain" id="PRO_0000150356" description="Sirohydrochlorin cobaltochelatase">
    <location>
        <begin position="1"/>
        <end position="143"/>
    </location>
</feature>
<feature type="active site" description="Proton acceptor" evidence="1">
    <location>
        <position position="9"/>
    </location>
</feature>
<feature type="binding site" evidence="1">
    <location>
        <position position="9"/>
    </location>
    <ligand>
        <name>Co(2+)</name>
        <dbReference type="ChEBI" id="CHEBI:48828"/>
    </ligand>
</feature>
<feature type="binding site" evidence="1">
    <location>
        <position position="9"/>
    </location>
    <ligand>
        <name>Ni(2+)</name>
        <dbReference type="ChEBI" id="CHEBI:49786"/>
    </ligand>
</feature>
<feature type="binding site" evidence="1">
    <location>
        <position position="45"/>
    </location>
    <ligand>
        <name>substrate</name>
    </ligand>
</feature>
<feature type="binding site" evidence="1">
    <location>
        <begin position="70"/>
        <end position="75"/>
    </location>
    <ligand>
        <name>substrate</name>
    </ligand>
</feature>
<feature type="binding site" evidence="1">
    <location>
        <position position="75"/>
    </location>
    <ligand>
        <name>Co(2+)</name>
        <dbReference type="ChEBI" id="CHEBI:48828"/>
    </ligand>
</feature>
<feature type="binding site" evidence="1">
    <location>
        <position position="75"/>
    </location>
    <ligand>
        <name>Ni(2+)</name>
        <dbReference type="ChEBI" id="CHEBI:49786"/>
    </ligand>
</feature>
<feature type="strand" evidence="2">
    <location>
        <begin position="2"/>
        <end position="8"/>
    </location>
</feature>
<feature type="strand" evidence="2">
    <location>
        <begin position="12"/>
        <end position="14"/>
    </location>
</feature>
<feature type="helix" evidence="2">
    <location>
        <begin position="15"/>
        <end position="30"/>
    </location>
</feature>
<feature type="strand" evidence="2">
    <location>
        <begin position="34"/>
        <end position="47"/>
    </location>
</feature>
<feature type="helix" evidence="2">
    <location>
        <begin position="48"/>
        <end position="57"/>
    </location>
</feature>
<feature type="strand" evidence="2">
    <location>
        <begin position="61"/>
        <end position="67"/>
    </location>
</feature>
<feature type="helix" evidence="2">
    <location>
        <begin position="74"/>
        <end position="77"/>
    </location>
</feature>
<feature type="helix" evidence="2">
    <location>
        <begin position="79"/>
        <end position="83"/>
    </location>
</feature>
<feature type="strand" evidence="2">
    <location>
        <begin position="119"/>
        <end position="122"/>
    </location>
</feature>
<feature type="helix" evidence="2">
    <location>
        <begin position="130"/>
        <end position="140"/>
    </location>
</feature>
<sequence>MEALVLVGHGSRLPYSKELLVKLAEKVKERNLFPIVEIGLMEFSEPTIPQAVKKAIEQGAKRIIVVPVFLAHGIHTTRDIPRLLGLIEDNHEHHHEHSHHHHHHHHHEHEKLEIPEDVEIIYREPIGADDRIVDIIIDRAFGR</sequence>